<protein>
    <recommendedName>
        <fullName evidence="2">Small ribosomal subunit protein uS13</fullName>
    </recommendedName>
    <alternativeName>
        <fullName evidence="4">30S ribosomal protein S13</fullName>
    </alternativeName>
</protein>
<sequence>MARIAGINIPDQKHAVIALTSIYGVGKTRSKAILAAAGIAENVKISELSEEQIDTLRDEVAKFVVEGDLRREISMSIKRLMDLGCYRGLRHRRGLPVRGQRTKTNARTRKGPCKPIKK</sequence>
<proteinExistence type="inferred from homology"/>
<dbReference type="EMBL" id="AL513382">
    <property type="protein sequence ID" value="CAD09168.1"/>
    <property type="molecule type" value="Genomic_DNA"/>
</dbReference>
<dbReference type="EMBL" id="AE014613">
    <property type="protein sequence ID" value="AAO71554.1"/>
    <property type="molecule type" value="Genomic_DNA"/>
</dbReference>
<dbReference type="RefSeq" id="NP_458482.1">
    <property type="nucleotide sequence ID" value="NC_003198.1"/>
</dbReference>
<dbReference type="RefSeq" id="WP_000090779.1">
    <property type="nucleotide sequence ID" value="NZ_WSUR01000046.1"/>
</dbReference>
<dbReference type="SMR" id="Q8Z1X6"/>
<dbReference type="STRING" id="220341.gene:17588208"/>
<dbReference type="KEGG" id="stt:t4087"/>
<dbReference type="KEGG" id="sty:STY4380"/>
<dbReference type="PATRIC" id="fig|220341.7.peg.4476"/>
<dbReference type="eggNOG" id="COG0099">
    <property type="taxonomic scope" value="Bacteria"/>
</dbReference>
<dbReference type="HOGENOM" id="CLU_103849_1_2_6"/>
<dbReference type="OMA" id="MNVKRLM"/>
<dbReference type="OrthoDB" id="9803610at2"/>
<dbReference type="Proteomes" id="UP000000541">
    <property type="component" value="Chromosome"/>
</dbReference>
<dbReference type="Proteomes" id="UP000002670">
    <property type="component" value="Chromosome"/>
</dbReference>
<dbReference type="GO" id="GO:0005829">
    <property type="term" value="C:cytosol"/>
    <property type="evidence" value="ECO:0007669"/>
    <property type="project" value="TreeGrafter"/>
</dbReference>
<dbReference type="GO" id="GO:0015935">
    <property type="term" value="C:small ribosomal subunit"/>
    <property type="evidence" value="ECO:0007669"/>
    <property type="project" value="TreeGrafter"/>
</dbReference>
<dbReference type="GO" id="GO:0019843">
    <property type="term" value="F:rRNA binding"/>
    <property type="evidence" value="ECO:0007669"/>
    <property type="project" value="UniProtKB-UniRule"/>
</dbReference>
<dbReference type="GO" id="GO:0003735">
    <property type="term" value="F:structural constituent of ribosome"/>
    <property type="evidence" value="ECO:0007669"/>
    <property type="project" value="InterPro"/>
</dbReference>
<dbReference type="GO" id="GO:0000049">
    <property type="term" value="F:tRNA binding"/>
    <property type="evidence" value="ECO:0007669"/>
    <property type="project" value="UniProtKB-UniRule"/>
</dbReference>
<dbReference type="GO" id="GO:0006412">
    <property type="term" value="P:translation"/>
    <property type="evidence" value="ECO:0007669"/>
    <property type="project" value="UniProtKB-UniRule"/>
</dbReference>
<dbReference type="FunFam" id="1.10.8.50:FF:000001">
    <property type="entry name" value="30S ribosomal protein S13"/>
    <property type="match status" value="1"/>
</dbReference>
<dbReference type="FunFam" id="4.10.910.10:FF:000001">
    <property type="entry name" value="30S ribosomal protein S13"/>
    <property type="match status" value="1"/>
</dbReference>
<dbReference type="Gene3D" id="1.10.8.50">
    <property type="match status" value="1"/>
</dbReference>
<dbReference type="Gene3D" id="4.10.910.10">
    <property type="entry name" value="30s ribosomal protein s13, domain 2"/>
    <property type="match status" value="1"/>
</dbReference>
<dbReference type="HAMAP" id="MF_01315">
    <property type="entry name" value="Ribosomal_uS13"/>
    <property type="match status" value="1"/>
</dbReference>
<dbReference type="InterPro" id="IPR027437">
    <property type="entry name" value="Rbsml_uS13_C"/>
</dbReference>
<dbReference type="InterPro" id="IPR001892">
    <property type="entry name" value="Ribosomal_uS13"/>
</dbReference>
<dbReference type="InterPro" id="IPR010979">
    <property type="entry name" value="Ribosomal_uS13-like_H2TH"/>
</dbReference>
<dbReference type="InterPro" id="IPR019980">
    <property type="entry name" value="Ribosomal_uS13_bac-type"/>
</dbReference>
<dbReference type="InterPro" id="IPR018269">
    <property type="entry name" value="Ribosomal_uS13_CS"/>
</dbReference>
<dbReference type="NCBIfam" id="TIGR03631">
    <property type="entry name" value="uS13_bact"/>
    <property type="match status" value="1"/>
</dbReference>
<dbReference type="PANTHER" id="PTHR10871">
    <property type="entry name" value="30S RIBOSOMAL PROTEIN S13/40S RIBOSOMAL PROTEIN S18"/>
    <property type="match status" value="1"/>
</dbReference>
<dbReference type="PANTHER" id="PTHR10871:SF1">
    <property type="entry name" value="SMALL RIBOSOMAL SUBUNIT PROTEIN US13M"/>
    <property type="match status" value="1"/>
</dbReference>
<dbReference type="Pfam" id="PF00416">
    <property type="entry name" value="Ribosomal_S13"/>
    <property type="match status" value="1"/>
</dbReference>
<dbReference type="PIRSF" id="PIRSF002134">
    <property type="entry name" value="Ribosomal_S13"/>
    <property type="match status" value="1"/>
</dbReference>
<dbReference type="SUPFAM" id="SSF46946">
    <property type="entry name" value="S13-like H2TH domain"/>
    <property type="match status" value="1"/>
</dbReference>
<dbReference type="PROSITE" id="PS00646">
    <property type="entry name" value="RIBOSOMAL_S13_1"/>
    <property type="match status" value="1"/>
</dbReference>
<dbReference type="PROSITE" id="PS50159">
    <property type="entry name" value="RIBOSOMAL_S13_2"/>
    <property type="match status" value="1"/>
</dbReference>
<gene>
    <name evidence="2" type="primary">rpsM</name>
    <name type="ordered locus">STY4380</name>
    <name type="ordered locus">t4087</name>
</gene>
<feature type="initiator methionine" description="Removed" evidence="1">
    <location>
        <position position="1"/>
    </location>
</feature>
<feature type="chain" id="PRO_0000132129" description="Small ribosomal subunit protein uS13">
    <location>
        <begin position="2"/>
        <end position="118"/>
    </location>
</feature>
<feature type="region of interest" description="Disordered" evidence="3">
    <location>
        <begin position="94"/>
        <end position="118"/>
    </location>
</feature>
<keyword id="KW-0687">Ribonucleoprotein</keyword>
<keyword id="KW-0689">Ribosomal protein</keyword>
<keyword id="KW-0694">RNA-binding</keyword>
<keyword id="KW-0699">rRNA-binding</keyword>
<keyword id="KW-0820">tRNA-binding</keyword>
<evidence type="ECO:0000250" key="1"/>
<evidence type="ECO:0000255" key="2">
    <source>
        <dbReference type="HAMAP-Rule" id="MF_01315"/>
    </source>
</evidence>
<evidence type="ECO:0000256" key="3">
    <source>
        <dbReference type="SAM" id="MobiDB-lite"/>
    </source>
</evidence>
<evidence type="ECO:0000305" key="4"/>
<organism>
    <name type="scientific">Salmonella typhi</name>
    <dbReference type="NCBI Taxonomy" id="90370"/>
    <lineage>
        <taxon>Bacteria</taxon>
        <taxon>Pseudomonadati</taxon>
        <taxon>Pseudomonadota</taxon>
        <taxon>Gammaproteobacteria</taxon>
        <taxon>Enterobacterales</taxon>
        <taxon>Enterobacteriaceae</taxon>
        <taxon>Salmonella</taxon>
    </lineage>
</organism>
<comment type="function">
    <text evidence="2">Located at the top of the head of the 30S subunit, it contacts several helices of the 16S rRNA. In the 70S ribosome it contacts the 23S rRNA (bridge B1a) and protein L5 of the 50S subunit (bridge B1b), connecting the 2 subunits; these bridges are implicated in subunit movement. Contacts the tRNAs in the A and P-sites.</text>
</comment>
<comment type="subunit">
    <text evidence="2">Part of the 30S ribosomal subunit. Forms a loose heterodimer with protein S19. Forms two bridges to the 50S subunit in the 70S ribosome.</text>
</comment>
<comment type="similarity">
    <text evidence="2">Belongs to the universal ribosomal protein uS13 family.</text>
</comment>
<name>RS13_SALTI</name>
<reference key="1">
    <citation type="journal article" date="2001" name="Nature">
        <title>Complete genome sequence of a multiple drug resistant Salmonella enterica serovar Typhi CT18.</title>
        <authorList>
            <person name="Parkhill J."/>
            <person name="Dougan G."/>
            <person name="James K.D."/>
            <person name="Thomson N.R."/>
            <person name="Pickard D."/>
            <person name="Wain J."/>
            <person name="Churcher C.M."/>
            <person name="Mungall K.L."/>
            <person name="Bentley S.D."/>
            <person name="Holden M.T.G."/>
            <person name="Sebaihia M."/>
            <person name="Baker S."/>
            <person name="Basham D."/>
            <person name="Brooks K."/>
            <person name="Chillingworth T."/>
            <person name="Connerton P."/>
            <person name="Cronin A."/>
            <person name="Davis P."/>
            <person name="Davies R.M."/>
            <person name="Dowd L."/>
            <person name="White N."/>
            <person name="Farrar J."/>
            <person name="Feltwell T."/>
            <person name="Hamlin N."/>
            <person name="Haque A."/>
            <person name="Hien T.T."/>
            <person name="Holroyd S."/>
            <person name="Jagels K."/>
            <person name="Krogh A."/>
            <person name="Larsen T.S."/>
            <person name="Leather S."/>
            <person name="Moule S."/>
            <person name="O'Gaora P."/>
            <person name="Parry C."/>
            <person name="Quail M.A."/>
            <person name="Rutherford K.M."/>
            <person name="Simmonds M."/>
            <person name="Skelton J."/>
            <person name="Stevens K."/>
            <person name="Whitehead S."/>
            <person name="Barrell B.G."/>
        </authorList>
    </citation>
    <scope>NUCLEOTIDE SEQUENCE [LARGE SCALE GENOMIC DNA]</scope>
    <source>
        <strain>CT18</strain>
    </source>
</reference>
<reference key="2">
    <citation type="journal article" date="2003" name="J. Bacteriol.">
        <title>Comparative genomics of Salmonella enterica serovar Typhi strains Ty2 and CT18.</title>
        <authorList>
            <person name="Deng W."/>
            <person name="Liou S.-R."/>
            <person name="Plunkett G. III"/>
            <person name="Mayhew G.F."/>
            <person name="Rose D.J."/>
            <person name="Burland V."/>
            <person name="Kodoyianni V."/>
            <person name="Schwartz D.C."/>
            <person name="Blattner F.R."/>
        </authorList>
    </citation>
    <scope>NUCLEOTIDE SEQUENCE [LARGE SCALE GENOMIC DNA]</scope>
    <source>
        <strain>ATCC 700931 / Ty2</strain>
    </source>
</reference>
<accession>Q8Z1X6</accession>